<comment type="function">
    <text evidence="1">May be involved in environmental stress response.</text>
</comment>
<proteinExistence type="evidence at transcript level"/>
<dbReference type="EMBL" id="AC002339">
    <property type="status" value="NOT_ANNOTATED_CDS"/>
    <property type="molecule type" value="Genomic_DNA"/>
</dbReference>
<dbReference type="EMBL" id="CP002685">
    <property type="protein sequence ID" value="AEC10038.1"/>
    <property type="molecule type" value="Genomic_DNA"/>
</dbReference>
<dbReference type="EMBL" id="AY065272">
    <property type="protein sequence ID" value="AAL38748.1"/>
    <property type="molecule type" value="mRNA"/>
</dbReference>
<dbReference type="EMBL" id="AY096620">
    <property type="protein sequence ID" value="AAM20270.1"/>
    <property type="molecule type" value="mRNA"/>
</dbReference>
<dbReference type="RefSeq" id="NP_850358.1">
    <property type="nucleotide sequence ID" value="NM_180027.3"/>
</dbReference>
<dbReference type="SMR" id="Q8VZ42"/>
<dbReference type="BioGRID" id="4120">
    <property type="interactions" value="11"/>
</dbReference>
<dbReference type="FunCoup" id="Q8VZ42">
    <property type="interactions" value="3247"/>
</dbReference>
<dbReference type="IntAct" id="Q8VZ42">
    <property type="interactions" value="11"/>
</dbReference>
<dbReference type="STRING" id="3702.Q8VZ42"/>
<dbReference type="PaxDb" id="3702-AT2G41835.1"/>
<dbReference type="ProteomicsDB" id="232897"/>
<dbReference type="EnsemblPlants" id="AT2G41835.1">
    <property type="protein sequence ID" value="AT2G41835.1"/>
    <property type="gene ID" value="AT2G41835"/>
</dbReference>
<dbReference type="GeneID" id="818783"/>
<dbReference type="Gramene" id="AT2G41835.1">
    <property type="protein sequence ID" value="AT2G41835.1"/>
    <property type="gene ID" value="AT2G41835"/>
</dbReference>
<dbReference type="KEGG" id="ath:AT2G41835"/>
<dbReference type="Araport" id="AT2G41835"/>
<dbReference type="TAIR" id="AT2G41835"/>
<dbReference type="eggNOG" id="KOG3183">
    <property type="taxonomic scope" value="Eukaryota"/>
</dbReference>
<dbReference type="HOGENOM" id="CLU_061621_1_0_1"/>
<dbReference type="InParanoid" id="Q8VZ42"/>
<dbReference type="OMA" id="QCPNANQ"/>
<dbReference type="PhylomeDB" id="Q8VZ42"/>
<dbReference type="PRO" id="PR:Q8VZ42"/>
<dbReference type="Proteomes" id="UP000006548">
    <property type="component" value="Chromosome 2"/>
</dbReference>
<dbReference type="ExpressionAtlas" id="Q8VZ42">
    <property type="expression patterns" value="baseline and differential"/>
</dbReference>
<dbReference type="GO" id="GO:0008270">
    <property type="term" value="F:zinc ion binding"/>
    <property type="evidence" value="ECO:0007669"/>
    <property type="project" value="UniProtKB-KW"/>
</dbReference>
<dbReference type="FunFam" id="4.10.1110.10:FF:000003">
    <property type="entry name" value="AN1-type zinc finger protein 2B isoform X1"/>
    <property type="match status" value="1"/>
</dbReference>
<dbReference type="Gene3D" id="4.10.1110.10">
    <property type="entry name" value="AN1-like Zinc finger"/>
    <property type="match status" value="2"/>
</dbReference>
<dbReference type="Gene3D" id="3.30.160.60">
    <property type="entry name" value="Classic Zinc Finger"/>
    <property type="match status" value="1"/>
</dbReference>
<dbReference type="InterPro" id="IPR035896">
    <property type="entry name" value="AN1-like_Znf"/>
</dbReference>
<dbReference type="InterPro" id="IPR000058">
    <property type="entry name" value="Znf_AN1"/>
</dbReference>
<dbReference type="InterPro" id="IPR013087">
    <property type="entry name" value="Znf_C2H2_type"/>
</dbReference>
<dbReference type="PANTHER" id="PTHR14677">
    <property type="entry name" value="ARSENITE INDUCUBLE RNA ASSOCIATED PROTEIN AIP-1-RELATED"/>
    <property type="match status" value="1"/>
</dbReference>
<dbReference type="PANTHER" id="PTHR14677:SF27">
    <property type="entry name" value="ZINC FINGER AN1 AND C2H2 DOMAIN-CONTAINING STRESS-ASSOCIATED PROTEIN 11"/>
    <property type="match status" value="1"/>
</dbReference>
<dbReference type="Pfam" id="PF01428">
    <property type="entry name" value="zf-AN1"/>
    <property type="match status" value="2"/>
</dbReference>
<dbReference type="Pfam" id="PF00096">
    <property type="entry name" value="zf-C2H2"/>
    <property type="match status" value="1"/>
</dbReference>
<dbReference type="Pfam" id="PF25403">
    <property type="entry name" value="zf-C2H2_ZFAND2"/>
    <property type="match status" value="1"/>
</dbReference>
<dbReference type="SMART" id="SM00154">
    <property type="entry name" value="ZnF_AN1"/>
    <property type="match status" value="2"/>
</dbReference>
<dbReference type="SMART" id="SM00355">
    <property type="entry name" value="ZnF_C2H2"/>
    <property type="match status" value="2"/>
</dbReference>
<dbReference type="SUPFAM" id="SSF118310">
    <property type="entry name" value="AN1-like Zinc finger"/>
    <property type="match status" value="2"/>
</dbReference>
<dbReference type="PROSITE" id="PS51039">
    <property type="entry name" value="ZF_AN1"/>
    <property type="match status" value="2"/>
</dbReference>
<dbReference type="PROSITE" id="PS00028">
    <property type="entry name" value="ZINC_FINGER_C2H2_1"/>
    <property type="match status" value="2"/>
</dbReference>
<dbReference type="PROSITE" id="PS50157">
    <property type="entry name" value="ZINC_FINGER_C2H2_2"/>
    <property type="match status" value="2"/>
</dbReference>
<reference key="1">
    <citation type="journal article" date="1999" name="Nature">
        <title>Sequence and analysis of chromosome 2 of the plant Arabidopsis thaliana.</title>
        <authorList>
            <person name="Lin X."/>
            <person name="Kaul S."/>
            <person name="Rounsley S.D."/>
            <person name="Shea T.P."/>
            <person name="Benito M.-I."/>
            <person name="Town C.D."/>
            <person name="Fujii C.Y."/>
            <person name="Mason T.M."/>
            <person name="Bowman C.L."/>
            <person name="Barnstead M.E."/>
            <person name="Feldblyum T.V."/>
            <person name="Buell C.R."/>
            <person name="Ketchum K.A."/>
            <person name="Lee J.J."/>
            <person name="Ronning C.M."/>
            <person name="Koo H.L."/>
            <person name="Moffat K.S."/>
            <person name="Cronin L.A."/>
            <person name="Shen M."/>
            <person name="Pai G."/>
            <person name="Van Aken S."/>
            <person name="Umayam L."/>
            <person name="Tallon L.J."/>
            <person name="Gill J.E."/>
            <person name="Adams M.D."/>
            <person name="Carrera A.J."/>
            <person name="Creasy T.H."/>
            <person name="Goodman H.M."/>
            <person name="Somerville C.R."/>
            <person name="Copenhaver G.P."/>
            <person name="Preuss D."/>
            <person name="Nierman W.C."/>
            <person name="White O."/>
            <person name="Eisen J.A."/>
            <person name="Salzberg S.L."/>
            <person name="Fraser C.M."/>
            <person name="Venter J.C."/>
        </authorList>
    </citation>
    <scope>NUCLEOTIDE SEQUENCE [LARGE SCALE GENOMIC DNA]</scope>
    <source>
        <strain>cv. Columbia</strain>
    </source>
</reference>
<reference key="2">
    <citation type="journal article" date="2017" name="Plant J.">
        <title>Araport11: a complete reannotation of the Arabidopsis thaliana reference genome.</title>
        <authorList>
            <person name="Cheng C.Y."/>
            <person name="Krishnakumar V."/>
            <person name="Chan A.P."/>
            <person name="Thibaud-Nissen F."/>
            <person name="Schobel S."/>
            <person name="Town C.D."/>
        </authorList>
    </citation>
    <scope>GENOME REANNOTATION</scope>
    <source>
        <strain>cv. Columbia</strain>
    </source>
</reference>
<reference key="3">
    <citation type="journal article" date="2003" name="Science">
        <title>Empirical analysis of transcriptional activity in the Arabidopsis genome.</title>
        <authorList>
            <person name="Yamada K."/>
            <person name="Lim J."/>
            <person name="Dale J.M."/>
            <person name="Chen H."/>
            <person name="Shinn P."/>
            <person name="Palm C.J."/>
            <person name="Southwick A.M."/>
            <person name="Wu H.C."/>
            <person name="Kim C.J."/>
            <person name="Nguyen M."/>
            <person name="Pham P.K."/>
            <person name="Cheuk R.F."/>
            <person name="Karlin-Newmann G."/>
            <person name="Liu S.X."/>
            <person name="Lam B."/>
            <person name="Sakano H."/>
            <person name="Wu T."/>
            <person name="Yu G."/>
            <person name="Miranda M."/>
            <person name="Quach H.L."/>
            <person name="Tripp M."/>
            <person name="Chang C.H."/>
            <person name="Lee J.M."/>
            <person name="Toriumi M.J."/>
            <person name="Chan M.M."/>
            <person name="Tang C.C."/>
            <person name="Onodera C.S."/>
            <person name="Deng J.M."/>
            <person name="Akiyama K."/>
            <person name="Ansari Y."/>
            <person name="Arakawa T."/>
            <person name="Banh J."/>
            <person name="Banno F."/>
            <person name="Bowser L."/>
            <person name="Brooks S.Y."/>
            <person name="Carninci P."/>
            <person name="Chao Q."/>
            <person name="Choy N."/>
            <person name="Enju A."/>
            <person name="Goldsmith A.D."/>
            <person name="Gurjal M."/>
            <person name="Hansen N.F."/>
            <person name="Hayashizaki Y."/>
            <person name="Johnson-Hopson C."/>
            <person name="Hsuan V.W."/>
            <person name="Iida K."/>
            <person name="Karnes M."/>
            <person name="Khan S."/>
            <person name="Koesema E."/>
            <person name="Ishida J."/>
            <person name="Jiang P.X."/>
            <person name="Jones T."/>
            <person name="Kawai J."/>
            <person name="Kamiya A."/>
            <person name="Meyers C."/>
            <person name="Nakajima M."/>
            <person name="Narusaka M."/>
            <person name="Seki M."/>
            <person name="Sakurai T."/>
            <person name="Satou M."/>
            <person name="Tamse R."/>
            <person name="Vaysberg M."/>
            <person name="Wallender E.K."/>
            <person name="Wong C."/>
            <person name="Yamamura Y."/>
            <person name="Yuan S."/>
            <person name="Shinozaki K."/>
            <person name="Davis R.W."/>
            <person name="Theologis A."/>
            <person name="Ecker J.R."/>
        </authorList>
    </citation>
    <scope>NUCLEOTIDE SEQUENCE [LARGE SCALE MRNA]</scope>
    <source>
        <strain>cv. Columbia</strain>
    </source>
</reference>
<reference key="4">
    <citation type="journal article" date="2006" name="Mol. Genet. Genomics">
        <title>Genome-wide analysis of the stress associated protein (SAP) gene family containing A20/AN1 zinc-finger(s) in rice and their phylogenetic relationship with Arabidopsis.</title>
        <authorList>
            <person name="Vij S."/>
            <person name="Tyagi A.K."/>
        </authorList>
    </citation>
    <scope>GENE FAMILY</scope>
</reference>
<organism>
    <name type="scientific">Arabidopsis thaliana</name>
    <name type="common">Mouse-ear cress</name>
    <dbReference type="NCBI Taxonomy" id="3702"/>
    <lineage>
        <taxon>Eukaryota</taxon>
        <taxon>Viridiplantae</taxon>
        <taxon>Streptophyta</taxon>
        <taxon>Embryophyta</taxon>
        <taxon>Tracheophyta</taxon>
        <taxon>Spermatophyta</taxon>
        <taxon>Magnoliopsida</taxon>
        <taxon>eudicotyledons</taxon>
        <taxon>Gunneridae</taxon>
        <taxon>Pentapetalae</taxon>
        <taxon>rosids</taxon>
        <taxon>malvids</taxon>
        <taxon>Brassicales</taxon>
        <taxon>Brassicaceae</taxon>
        <taxon>Camelineae</taxon>
        <taxon>Arabidopsis</taxon>
    </lineage>
</organism>
<name>SAP11_ARATH</name>
<keyword id="KW-0479">Metal-binding</keyword>
<keyword id="KW-1185">Reference proteome</keyword>
<keyword id="KW-0677">Repeat</keyword>
<keyword id="KW-0862">Zinc</keyword>
<keyword id="KW-0863">Zinc-finger</keyword>
<gene>
    <name type="primary">SAP11</name>
    <name type="ordered locus">At2g41835</name>
    <name type="ORF">T11A7.20</name>
</gene>
<evidence type="ECO:0000250" key="1"/>
<evidence type="ECO:0000255" key="2">
    <source>
        <dbReference type="PROSITE-ProRule" id="PRU00042"/>
    </source>
</evidence>
<evidence type="ECO:0000255" key="3">
    <source>
        <dbReference type="PROSITE-ProRule" id="PRU00449"/>
    </source>
</evidence>
<evidence type="ECO:0000256" key="4">
    <source>
        <dbReference type="SAM" id="MobiDB-lite"/>
    </source>
</evidence>
<feature type="chain" id="PRO_0000269862" description="Zinc finger AN1 and C2H2 domain-containing stress-associated protein 11">
    <location>
        <begin position="1"/>
        <end position="279"/>
    </location>
</feature>
<feature type="zinc finger region" description="AN1-type 1" evidence="3">
    <location>
        <begin position="7"/>
        <end position="55"/>
    </location>
</feature>
<feature type="zinc finger region" description="AN1-type 2" evidence="3">
    <location>
        <begin position="95"/>
        <end position="145"/>
    </location>
</feature>
<feature type="zinc finger region" description="C2H2-type 1" evidence="2">
    <location>
        <begin position="213"/>
        <end position="236"/>
    </location>
</feature>
<feature type="zinc finger region" description="C2H2-type 2" evidence="2">
    <location>
        <begin position="250"/>
        <end position="273"/>
    </location>
</feature>
<feature type="region of interest" description="Disordered" evidence="4">
    <location>
        <begin position="152"/>
        <end position="178"/>
    </location>
</feature>
<feature type="compositionally biased region" description="Low complexity" evidence="4">
    <location>
        <begin position="169"/>
        <end position="178"/>
    </location>
</feature>
<feature type="binding site" evidence="3">
    <location>
        <position position="13"/>
    </location>
    <ligand>
        <name>Zn(2+)</name>
        <dbReference type="ChEBI" id="CHEBI:29105"/>
        <label>1</label>
    </ligand>
</feature>
<feature type="binding site" evidence="3">
    <location>
        <position position="18"/>
    </location>
    <ligand>
        <name>Zn(2+)</name>
        <dbReference type="ChEBI" id="CHEBI:29105"/>
        <label>1</label>
    </ligand>
</feature>
<feature type="binding site" evidence="3">
    <location>
        <position position="28"/>
    </location>
    <ligand>
        <name>Zn(2+)</name>
        <dbReference type="ChEBI" id="CHEBI:29105"/>
        <label>2</label>
    </ligand>
</feature>
<feature type="binding site" evidence="3">
    <location>
        <position position="31"/>
    </location>
    <ligand>
        <name>Zn(2+)</name>
        <dbReference type="ChEBI" id="CHEBI:29105"/>
        <label>2</label>
    </ligand>
</feature>
<feature type="binding site" evidence="3">
    <location>
        <position position="36"/>
    </location>
    <ligand>
        <name>Zn(2+)</name>
        <dbReference type="ChEBI" id="CHEBI:29105"/>
        <label>1</label>
    </ligand>
</feature>
<feature type="binding site" evidence="3">
    <location>
        <position position="39"/>
    </location>
    <ligand>
        <name>Zn(2+)</name>
        <dbReference type="ChEBI" id="CHEBI:29105"/>
        <label>1</label>
    </ligand>
</feature>
<feature type="binding site" evidence="3">
    <location>
        <position position="45"/>
    </location>
    <ligand>
        <name>Zn(2+)</name>
        <dbReference type="ChEBI" id="CHEBI:29105"/>
        <label>2</label>
    </ligand>
</feature>
<feature type="binding site" evidence="3">
    <location>
        <position position="47"/>
    </location>
    <ligand>
        <name>Zn(2+)</name>
        <dbReference type="ChEBI" id="CHEBI:29105"/>
        <label>2</label>
    </ligand>
</feature>
<feature type="binding site" evidence="3">
    <location>
        <position position="101"/>
    </location>
    <ligand>
        <name>Zn(2+)</name>
        <dbReference type="ChEBI" id="CHEBI:29105"/>
        <label>3</label>
    </ligand>
</feature>
<feature type="binding site" evidence="3">
    <location>
        <position position="106"/>
    </location>
    <ligand>
        <name>Zn(2+)</name>
        <dbReference type="ChEBI" id="CHEBI:29105"/>
        <label>3</label>
    </ligand>
</feature>
<feature type="binding site" evidence="3">
    <location>
        <position position="118"/>
    </location>
    <ligand>
        <name>Zn(2+)</name>
        <dbReference type="ChEBI" id="CHEBI:29105"/>
        <label>4</label>
    </ligand>
</feature>
<feature type="binding site" evidence="3">
    <location>
        <position position="121"/>
    </location>
    <ligand>
        <name>Zn(2+)</name>
        <dbReference type="ChEBI" id="CHEBI:29105"/>
        <label>4</label>
    </ligand>
</feature>
<feature type="binding site" evidence="3">
    <location>
        <position position="126"/>
    </location>
    <ligand>
        <name>Zn(2+)</name>
        <dbReference type="ChEBI" id="CHEBI:29105"/>
        <label>3</label>
    </ligand>
</feature>
<feature type="binding site" evidence="3">
    <location>
        <position position="129"/>
    </location>
    <ligand>
        <name>Zn(2+)</name>
        <dbReference type="ChEBI" id="CHEBI:29105"/>
        <label>3</label>
    </ligand>
</feature>
<feature type="binding site" evidence="3">
    <location>
        <position position="135"/>
    </location>
    <ligand>
        <name>Zn(2+)</name>
        <dbReference type="ChEBI" id="CHEBI:29105"/>
        <label>4</label>
    </ligand>
</feature>
<feature type="binding site" evidence="3">
    <location>
        <position position="137"/>
    </location>
    <ligand>
        <name>Zn(2+)</name>
        <dbReference type="ChEBI" id="CHEBI:29105"/>
        <label>4</label>
    </ligand>
</feature>
<protein>
    <recommendedName>
        <fullName>Zinc finger AN1 and C2H2 domain-containing stress-associated protein 11</fullName>
        <shortName>AtSAP11</shortName>
    </recommendedName>
</protein>
<sequence>MGTPEFPDLGKHCSVDVCKQIDFLPFTCDRCLQVFCLDHRSYMKHSCPKGDREDVTVVICPLCAKGVRLNPNEDPNITWEKHVNTDCDPSNYEKATKKKKCPVPRCKEYLTFSNTIKCRDCNVDHCLKHRFGPDHTCPGPRKLPFMGFLSSSTTRKEAKTTRPNKAHPSTSSSSSSSRWSNLLSSAEAGISRLGNDISQKLQFSSSKDNGIVEVCPQCGAKFSSVTSLVEHVEKTHERNKKQNHGNVTVDVCPRCSRGFRDPVDLVNHIERDHRGTSKA</sequence>
<accession>Q8VZ42</accession>